<accession>Q8C353</accession>
<accession>Q3UP68</accession>
<proteinExistence type="evidence at transcript level"/>
<dbReference type="EMBL" id="AK086895">
    <property type="protein sequence ID" value="BAC39758.1"/>
    <property type="molecule type" value="mRNA"/>
</dbReference>
<dbReference type="EMBL" id="AK143762">
    <property type="protein sequence ID" value="BAE25529.1"/>
    <property type="molecule type" value="mRNA"/>
</dbReference>
<dbReference type="EMBL" id="BC087877">
    <property type="protein sequence ID" value="AAH87877.1"/>
    <property type="molecule type" value="mRNA"/>
</dbReference>
<dbReference type="CCDS" id="CCDS29713.1"/>
<dbReference type="RefSeq" id="NP_898983.1">
    <property type="nucleotide sequence ID" value="NM_183160.3"/>
</dbReference>
<dbReference type="FunCoup" id="Q8C353">
    <property type="interactions" value="42"/>
</dbReference>
<dbReference type="STRING" id="10090.ENSMUSP00000060863"/>
<dbReference type="iPTMnet" id="Q8C353"/>
<dbReference type="PhosphoSitePlus" id="Q8C353"/>
<dbReference type="PaxDb" id="10090-ENSMUSP00000060863"/>
<dbReference type="ProteomicsDB" id="259557"/>
<dbReference type="Antibodypedia" id="51987">
    <property type="antibodies" value="37 antibodies from 7 providers"/>
</dbReference>
<dbReference type="DNASU" id="226040"/>
<dbReference type="Ensembl" id="ENSMUST00000057243.6">
    <property type="protein sequence ID" value="ENSMUSP00000060863.5"/>
    <property type="gene ID" value="ENSMUSG00000048572.6"/>
</dbReference>
<dbReference type="GeneID" id="226040"/>
<dbReference type="KEGG" id="mmu:226040"/>
<dbReference type="UCSC" id="uc008har.1">
    <property type="organism name" value="mouse"/>
</dbReference>
<dbReference type="AGR" id="MGI:3583948"/>
<dbReference type="CTD" id="169693"/>
<dbReference type="MGI" id="MGI:3583948">
    <property type="gene designation" value="Tmem252"/>
</dbReference>
<dbReference type="VEuPathDB" id="HostDB:ENSMUSG00000048572"/>
<dbReference type="eggNOG" id="ENOG502S6KQ">
    <property type="taxonomic scope" value="Eukaryota"/>
</dbReference>
<dbReference type="GeneTree" id="ENSGT00390000005250"/>
<dbReference type="HOGENOM" id="CLU_117690_0_0_1"/>
<dbReference type="InParanoid" id="Q8C353"/>
<dbReference type="OMA" id="LYTEMGL"/>
<dbReference type="OrthoDB" id="9896070at2759"/>
<dbReference type="PhylomeDB" id="Q8C353"/>
<dbReference type="TreeFam" id="TF337811"/>
<dbReference type="BioGRID-ORCS" id="226040">
    <property type="hits" value="0 hits in 76 CRISPR screens"/>
</dbReference>
<dbReference type="PRO" id="PR:Q8C353"/>
<dbReference type="Proteomes" id="UP000000589">
    <property type="component" value="Chromosome 19"/>
</dbReference>
<dbReference type="RNAct" id="Q8C353">
    <property type="molecule type" value="protein"/>
</dbReference>
<dbReference type="Bgee" id="ENSMUSG00000048572">
    <property type="expression patterns" value="Expressed in proximal tubule and 122 other cell types or tissues"/>
</dbReference>
<dbReference type="GO" id="GO:0016020">
    <property type="term" value="C:membrane"/>
    <property type="evidence" value="ECO:0007669"/>
    <property type="project" value="UniProtKB-SubCell"/>
</dbReference>
<dbReference type="InterPro" id="IPR031363">
    <property type="entry name" value="TMEM252"/>
</dbReference>
<dbReference type="PANTHER" id="PTHR35682">
    <property type="entry name" value="TRANSMEMBRANE PROTEIN 252"/>
    <property type="match status" value="1"/>
</dbReference>
<dbReference type="PANTHER" id="PTHR35682:SF1">
    <property type="entry name" value="TRANSMEMBRANE PROTEIN 252"/>
    <property type="match status" value="1"/>
</dbReference>
<dbReference type="Pfam" id="PF15664">
    <property type="entry name" value="TMEM252"/>
    <property type="match status" value="1"/>
</dbReference>
<evidence type="ECO:0000255" key="1"/>
<evidence type="ECO:0000305" key="2"/>
<reference key="1">
    <citation type="journal article" date="2005" name="Science">
        <title>The transcriptional landscape of the mammalian genome.</title>
        <authorList>
            <person name="Carninci P."/>
            <person name="Kasukawa T."/>
            <person name="Katayama S."/>
            <person name="Gough J."/>
            <person name="Frith M.C."/>
            <person name="Maeda N."/>
            <person name="Oyama R."/>
            <person name="Ravasi T."/>
            <person name="Lenhard B."/>
            <person name="Wells C."/>
            <person name="Kodzius R."/>
            <person name="Shimokawa K."/>
            <person name="Bajic V.B."/>
            <person name="Brenner S.E."/>
            <person name="Batalov S."/>
            <person name="Forrest A.R."/>
            <person name="Zavolan M."/>
            <person name="Davis M.J."/>
            <person name="Wilming L.G."/>
            <person name="Aidinis V."/>
            <person name="Allen J.E."/>
            <person name="Ambesi-Impiombato A."/>
            <person name="Apweiler R."/>
            <person name="Aturaliya R.N."/>
            <person name="Bailey T.L."/>
            <person name="Bansal M."/>
            <person name="Baxter L."/>
            <person name="Beisel K.W."/>
            <person name="Bersano T."/>
            <person name="Bono H."/>
            <person name="Chalk A.M."/>
            <person name="Chiu K.P."/>
            <person name="Choudhary V."/>
            <person name="Christoffels A."/>
            <person name="Clutterbuck D.R."/>
            <person name="Crowe M.L."/>
            <person name="Dalla E."/>
            <person name="Dalrymple B.P."/>
            <person name="de Bono B."/>
            <person name="Della Gatta G."/>
            <person name="di Bernardo D."/>
            <person name="Down T."/>
            <person name="Engstrom P."/>
            <person name="Fagiolini M."/>
            <person name="Faulkner G."/>
            <person name="Fletcher C.F."/>
            <person name="Fukushima T."/>
            <person name="Furuno M."/>
            <person name="Futaki S."/>
            <person name="Gariboldi M."/>
            <person name="Georgii-Hemming P."/>
            <person name="Gingeras T.R."/>
            <person name="Gojobori T."/>
            <person name="Green R.E."/>
            <person name="Gustincich S."/>
            <person name="Harbers M."/>
            <person name="Hayashi Y."/>
            <person name="Hensch T.K."/>
            <person name="Hirokawa N."/>
            <person name="Hill D."/>
            <person name="Huminiecki L."/>
            <person name="Iacono M."/>
            <person name="Ikeo K."/>
            <person name="Iwama A."/>
            <person name="Ishikawa T."/>
            <person name="Jakt M."/>
            <person name="Kanapin A."/>
            <person name="Katoh M."/>
            <person name="Kawasawa Y."/>
            <person name="Kelso J."/>
            <person name="Kitamura H."/>
            <person name="Kitano H."/>
            <person name="Kollias G."/>
            <person name="Krishnan S.P."/>
            <person name="Kruger A."/>
            <person name="Kummerfeld S.K."/>
            <person name="Kurochkin I.V."/>
            <person name="Lareau L.F."/>
            <person name="Lazarevic D."/>
            <person name="Lipovich L."/>
            <person name="Liu J."/>
            <person name="Liuni S."/>
            <person name="McWilliam S."/>
            <person name="Madan Babu M."/>
            <person name="Madera M."/>
            <person name="Marchionni L."/>
            <person name="Matsuda H."/>
            <person name="Matsuzawa S."/>
            <person name="Miki H."/>
            <person name="Mignone F."/>
            <person name="Miyake S."/>
            <person name="Morris K."/>
            <person name="Mottagui-Tabar S."/>
            <person name="Mulder N."/>
            <person name="Nakano N."/>
            <person name="Nakauchi H."/>
            <person name="Ng P."/>
            <person name="Nilsson R."/>
            <person name="Nishiguchi S."/>
            <person name="Nishikawa S."/>
            <person name="Nori F."/>
            <person name="Ohara O."/>
            <person name="Okazaki Y."/>
            <person name="Orlando V."/>
            <person name="Pang K.C."/>
            <person name="Pavan W.J."/>
            <person name="Pavesi G."/>
            <person name="Pesole G."/>
            <person name="Petrovsky N."/>
            <person name="Piazza S."/>
            <person name="Reed J."/>
            <person name="Reid J.F."/>
            <person name="Ring B.Z."/>
            <person name="Ringwald M."/>
            <person name="Rost B."/>
            <person name="Ruan Y."/>
            <person name="Salzberg S.L."/>
            <person name="Sandelin A."/>
            <person name="Schneider C."/>
            <person name="Schoenbach C."/>
            <person name="Sekiguchi K."/>
            <person name="Semple C.A."/>
            <person name="Seno S."/>
            <person name="Sessa L."/>
            <person name="Sheng Y."/>
            <person name="Shibata Y."/>
            <person name="Shimada H."/>
            <person name="Shimada K."/>
            <person name="Silva D."/>
            <person name="Sinclair B."/>
            <person name="Sperling S."/>
            <person name="Stupka E."/>
            <person name="Sugiura K."/>
            <person name="Sultana R."/>
            <person name="Takenaka Y."/>
            <person name="Taki K."/>
            <person name="Tammoja K."/>
            <person name="Tan S.L."/>
            <person name="Tang S."/>
            <person name="Taylor M.S."/>
            <person name="Tegner J."/>
            <person name="Teichmann S.A."/>
            <person name="Ueda H.R."/>
            <person name="van Nimwegen E."/>
            <person name="Verardo R."/>
            <person name="Wei C.L."/>
            <person name="Yagi K."/>
            <person name="Yamanishi H."/>
            <person name="Zabarovsky E."/>
            <person name="Zhu S."/>
            <person name="Zimmer A."/>
            <person name="Hide W."/>
            <person name="Bult C."/>
            <person name="Grimmond S.M."/>
            <person name="Teasdale R.D."/>
            <person name="Liu E.T."/>
            <person name="Brusic V."/>
            <person name="Quackenbush J."/>
            <person name="Wahlestedt C."/>
            <person name="Mattick J.S."/>
            <person name="Hume D.A."/>
            <person name="Kai C."/>
            <person name="Sasaki D."/>
            <person name="Tomaru Y."/>
            <person name="Fukuda S."/>
            <person name="Kanamori-Katayama M."/>
            <person name="Suzuki M."/>
            <person name="Aoki J."/>
            <person name="Arakawa T."/>
            <person name="Iida J."/>
            <person name="Imamura K."/>
            <person name="Itoh M."/>
            <person name="Kato T."/>
            <person name="Kawaji H."/>
            <person name="Kawagashira N."/>
            <person name="Kawashima T."/>
            <person name="Kojima M."/>
            <person name="Kondo S."/>
            <person name="Konno H."/>
            <person name="Nakano K."/>
            <person name="Ninomiya N."/>
            <person name="Nishio T."/>
            <person name="Okada M."/>
            <person name="Plessy C."/>
            <person name="Shibata K."/>
            <person name="Shiraki T."/>
            <person name="Suzuki S."/>
            <person name="Tagami M."/>
            <person name="Waki K."/>
            <person name="Watahiki A."/>
            <person name="Okamura-Oho Y."/>
            <person name="Suzuki H."/>
            <person name="Kawai J."/>
            <person name="Hayashizaki Y."/>
        </authorList>
    </citation>
    <scope>NUCLEOTIDE SEQUENCE [LARGE SCALE MRNA]</scope>
    <source>
        <strain>C57BL/6J</strain>
        <tissue>Lung</tissue>
        <tissue>Spleen</tissue>
    </source>
</reference>
<reference key="2">
    <citation type="journal article" date="2004" name="Genome Res.">
        <title>The status, quality, and expansion of the NIH full-length cDNA project: the Mammalian Gene Collection (MGC).</title>
        <authorList>
            <consortium name="The MGC Project Team"/>
        </authorList>
    </citation>
    <scope>NUCLEOTIDE SEQUENCE [LARGE SCALE MRNA]</scope>
    <source>
        <tissue>Kidney</tissue>
    </source>
</reference>
<keyword id="KW-0472">Membrane</keyword>
<keyword id="KW-1185">Reference proteome</keyword>
<keyword id="KW-0812">Transmembrane</keyword>
<keyword id="KW-1133">Transmembrane helix</keyword>
<organism>
    <name type="scientific">Mus musculus</name>
    <name type="common">Mouse</name>
    <dbReference type="NCBI Taxonomy" id="10090"/>
    <lineage>
        <taxon>Eukaryota</taxon>
        <taxon>Metazoa</taxon>
        <taxon>Chordata</taxon>
        <taxon>Craniata</taxon>
        <taxon>Vertebrata</taxon>
        <taxon>Euteleostomi</taxon>
        <taxon>Mammalia</taxon>
        <taxon>Eutheria</taxon>
        <taxon>Euarchontoglires</taxon>
        <taxon>Glires</taxon>
        <taxon>Rodentia</taxon>
        <taxon>Myomorpha</taxon>
        <taxon>Muroidea</taxon>
        <taxon>Muridae</taxon>
        <taxon>Murinae</taxon>
        <taxon>Mus</taxon>
        <taxon>Mus</taxon>
    </lineage>
</organism>
<sequence>MQNRTGLILCALSLLTGFLMICLGGFFISNSIFHSQRNLVVAYVLLPMGFVILLSGIFWGTYRQANENKEMFNHVLRQHLAFQDLPLATVDRPDFYPPAYEESLDVEKQACPAGRELLGFPPPLYTETNLEFEHLEDPQPEAPPPYQEIIADAGAPAKAQDAEEPSRVLKAGTALQLTELTGR</sequence>
<protein>
    <recommendedName>
        <fullName>Transmembrane protein 252</fullName>
    </recommendedName>
</protein>
<gene>
    <name type="primary">Tmem252</name>
</gene>
<feature type="chain" id="PRO_0000089708" description="Transmembrane protein 252">
    <location>
        <begin position="1"/>
        <end position="183"/>
    </location>
</feature>
<feature type="transmembrane region" description="Helical" evidence="1">
    <location>
        <begin position="8"/>
        <end position="28"/>
    </location>
</feature>
<feature type="transmembrane region" description="Helical" evidence="1">
    <location>
        <begin position="39"/>
        <end position="59"/>
    </location>
</feature>
<comment type="subcellular location">
    <subcellularLocation>
        <location evidence="2">Membrane</location>
        <topology evidence="2">Multi-pass membrane protein</topology>
    </subcellularLocation>
</comment>
<name>TM252_MOUSE</name>